<keyword id="KW-0067">ATP-binding</keyword>
<keyword id="KW-0418">Kinase</keyword>
<keyword id="KW-0547">Nucleotide-binding</keyword>
<keyword id="KW-0597">Phosphoprotein</keyword>
<keyword id="KW-1185">Reference proteome</keyword>
<keyword id="KW-0723">Serine/threonine-protein kinase</keyword>
<keyword id="KW-0808">Transferase</keyword>
<keyword id="KW-0829">Tyrosine-protein kinase</keyword>
<organism>
    <name type="scientific">Cyprinus carpio</name>
    <name type="common">Common carp</name>
    <dbReference type="NCBI Taxonomy" id="7962"/>
    <lineage>
        <taxon>Eukaryota</taxon>
        <taxon>Metazoa</taxon>
        <taxon>Chordata</taxon>
        <taxon>Craniata</taxon>
        <taxon>Vertebrata</taxon>
        <taxon>Euteleostomi</taxon>
        <taxon>Actinopterygii</taxon>
        <taxon>Neopterygii</taxon>
        <taxon>Teleostei</taxon>
        <taxon>Ostariophysi</taxon>
        <taxon>Cypriniformes</taxon>
        <taxon>Cyprinidae</taxon>
        <taxon>Cyprininae</taxon>
        <taxon>Cyprinus</taxon>
    </lineage>
</organism>
<gene>
    <name type="primary">map2k2</name>
    <name type="synonym">mkk</name>
</gene>
<protein>
    <recommendedName>
        <fullName>Dual specificity mitogen-activated protein kinase kinase 2</fullName>
        <shortName>MAP kinase kinase 2</shortName>
        <shortName>MAPKK 2</shortName>
        <ecNumber>2.7.12.2</ecNumber>
    </recommendedName>
    <alternativeName>
        <fullName>ERK activator kinase 2</fullName>
    </alternativeName>
    <alternativeName>
        <fullName>MAPK/ERK kinase 2</fullName>
        <shortName>MEK2</shortName>
    </alternativeName>
</protein>
<accession>Q90321</accession>
<sequence>MAPKRRPVPLIIAPTGEGQSTNIDAASEANLEALQRKLGELDLDEQQRKRLEAFLTQKAQVGELKDEDFDPICELGAGNGGVVHKVRHKPSRLVMARKLIHLEIKPAIRNQIIRELQVLHECNSPYIVGFYGAFYSDGEISICMEHMDGGSLDQVLKEARRIPEEILGKVSIAVLRGLVYLREKHQIMHRDVKPSNILVNSRGEIKLCDFGVSGQLIDSMANSFVGTRSYMSPERLQGTHYSVQSDVWSMGLSLVELAIGRFPIPPPDAKELEAIFGRPVLDKGGAEGHSMSPRQRPPGRPVSGHGMDSRPAMAIFELLDYIVNEPPPKLPHGVFTTDFEEFVMKCLMKNPADRADLKMLMGHTFIKRAEVEEVDFAGWMCKTMGLPQPSTPTHSAE</sequence>
<dbReference type="EC" id="2.7.12.2"/>
<dbReference type="EMBL" id="L23935">
    <property type="protein sequence ID" value="AAA19788.1"/>
    <property type="molecule type" value="mRNA"/>
</dbReference>
<dbReference type="PIR" id="S41054">
    <property type="entry name" value="S41054"/>
</dbReference>
<dbReference type="SMR" id="Q90321"/>
<dbReference type="BRENDA" id="2.7.12.2">
    <property type="organism ID" value="1195"/>
</dbReference>
<dbReference type="Proteomes" id="UP000694384">
    <property type="component" value="Unplaced"/>
</dbReference>
<dbReference type="Proteomes" id="UP000694427">
    <property type="component" value="Unplaced"/>
</dbReference>
<dbReference type="Proteomes" id="UP000694700">
    <property type="component" value="Unplaced"/>
</dbReference>
<dbReference type="Proteomes" id="UP000694701">
    <property type="component" value="Unplaced"/>
</dbReference>
<dbReference type="Proteomes" id="UP001155660">
    <property type="component" value="Unplaced"/>
</dbReference>
<dbReference type="GO" id="GO:0005769">
    <property type="term" value="C:early endosome"/>
    <property type="evidence" value="ECO:0007669"/>
    <property type="project" value="UniProtKB-ARBA"/>
</dbReference>
<dbReference type="GO" id="GO:0005925">
    <property type="term" value="C:focal adhesion"/>
    <property type="evidence" value="ECO:0007669"/>
    <property type="project" value="UniProtKB-ARBA"/>
</dbReference>
<dbReference type="GO" id="GO:0005770">
    <property type="term" value="C:late endosome"/>
    <property type="evidence" value="ECO:0007669"/>
    <property type="project" value="UniProtKB-ARBA"/>
</dbReference>
<dbReference type="GO" id="GO:0005739">
    <property type="term" value="C:mitochondrion"/>
    <property type="evidence" value="ECO:0007669"/>
    <property type="project" value="UniProtKB-ARBA"/>
</dbReference>
<dbReference type="GO" id="GO:0005524">
    <property type="term" value="F:ATP binding"/>
    <property type="evidence" value="ECO:0007669"/>
    <property type="project" value="UniProtKB-KW"/>
</dbReference>
<dbReference type="GO" id="GO:0004708">
    <property type="term" value="F:MAP kinase kinase activity"/>
    <property type="evidence" value="ECO:0007669"/>
    <property type="project" value="UniProtKB-EC"/>
</dbReference>
<dbReference type="GO" id="GO:0106310">
    <property type="term" value="F:protein serine kinase activity"/>
    <property type="evidence" value="ECO:0007669"/>
    <property type="project" value="RHEA"/>
</dbReference>
<dbReference type="GO" id="GO:0004674">
    <property type="term" value="F:protein serine/threonine kinase activity"/>
    <property type="evidence" value="ECO:0007669"/>
    <property type="project" value="UniProtKB-KW"/>
</dbReference>
<dbReference type="GO" id="GO:0004713">
    <property type="term" value="F:protein tyrosine kinase activity"/>
    <property type="evidence" value="ECO:0007669"/>
    <property type="project" value="UniProtKB-KW"/>
</dbReference>
<dbReference type="GO" id="GO:2000641">
    <property type="term" value="P:regulation of early endosome to late endosome transport"/>
    <property type="evidence" value="ECO:0007669"/>
    <property type="project" value="UniProtKB-ARBA"/>
</dbReference>
<dbReference type="GO" id="GO:0090170">
    <property type="term" value="P:regulation of Golgi inheritance"/>
    <property type="evidence" value="ECO:0007669"/>
    <property type="project" value="UniProtKB-ARBA"/>
</dbReference>
<dbReference type="GO" id="GO:0032872">
    <property type="term" value="P:regulation of stress-activated MAPK cascade"/>
    <property type="evidence" value="ECO:0007669"/>
    <property type="project" value="UniProtKB-ARBA"/>
</dbReference>
<dbReference type="CDD" id="cd06649">
    <property type="entry name" value="PKc_MEK2"/>
    <property type="match status" value="1"/>
</dbReference>
<dbReference type="FunFam" id="1.10.510.10:FF:000115">
    <property type="entry name" value="Dual specificity mitogen-activated protein kinase kinase 1"/>
    <property type="match status" value="1"/>
</dbReference>
<dbReference type="FunFam" id="3.30.200.20:FF:000100">
    <property type="entry name" value="Dual specificity mitogen-activated protein kinase kinase 1"/>
    <property type="match status" value="1"/>
</dbReference>
<dbReference type="Gene3D" id="3.30.200.20">
    <property type="entry name" value="Phosphorylase Kinase, domain 1"/>
    <property type="match status" value="1"/>
</dbReference>
<dbReference type="Gene3D" id="1.10.510.10">
    <property type="entry name" value="Transferase(Phosphotransferase) domain 1"/>
    <property type="match status" value="1"/>
</dbReference>
<dbReference type="InterPro" id="IPR011009">
    <property type="entry name" value="Kinase-like_dom_sf"/>
</dbReference>
<dbReference type="InterPro" id="IPR050915">
    <property type="entry name" value="MAP_kinase_kinase"/>
</dbReference>
<dbReference type="InterPro" id="IPR000719">
    <property type="entry name" value="Prot_kinase_dom"/>
</dbReference>
<dbReference type="InterPro" id="IPR017441">
    <property type="entry name" value="Protein_kinase_ATP_BS"/>
</dbReference>
<dbReference type="InterPro" id="IPR008271">
    <property type="entry name" value="Ser/Thr_kinase_AS"/>
</dbReference>
<dbReference type="PANTHER" id="PTHR47448">
    <property type="entry name" value="DUAL SPECIFICITY MITOGEN-ACTIVATED PROTEIN KINASE KINASE DSOR1-LIKE PROTEIN"/>
    <property type="match status" value="1"/>
</dbReference>
<dbReference type="PANTHER" id="PTHR47448:SF3">
    <property type="entry name" value="MITOGEN-ACTIVATED PROTEIN KINASE KINASE 2"/>
    <property type="match status" value="1"/>
</dbReference>
<dbReference type="Pfam" id="PF00069">
    <property type="entry name" value="Pkinase"/>
    <property type="match status" value="1"/>
</dbReference>
<dbReference type="SMART" id="SM00220">
    <property type="entry name" value="S_TKc"/>
    <property type="match status" value="1"/>
</dbReference>
<dbReference type="SUPFAM" id="SSF56112">
    <property type="entry name" value="Protein kinase-like (PK-like)"/>
    <property type="match status" value="1"/>
</dbReference>
<dbReference type="PROSITE" id="PS00107">
    <property type="entry name" value="PROTEIN_KINASE_ATP"/>
    <property type="match status" value="1"/>
</dbReference>
<dbReference type="PROSITE" id="PS50011">
    <property type="entry name" value="PROTEIN_KINASE_DOM"/>
    <property type="match status" value="1"/>
</dbReference>
<dbReference type="PROSITE" id="PS00108">
    <property type="entry name" value="PROTEIN_KINASE_ST"/>
    <property type="match status" value="1"/>
</dbReference>
<proteinExistence type="evidence at transcript level"/>
<evidence type="ECO:0000250" key="1"/>
<evidence type="ECO:0000255" key="2">
    <source>
        <dbReference type="PROSITE-ProRule" id="PRU00159"/>
    </source>
</evidence>
<evidence type="ECO:0000255" key="3">
    <source>
        <dbReference type="PROSITE-ProRule" id="PRU10027"/>
    </source>
</evidence>
<evidence type="ECO:0000256" key="4">
    <source>
        <dbReference type="SAM" id="MobiDB-lite"/>
    </source>
</evidence>
<evidence type="ECO:0000305" key="5"/>
<feature type="chain" id="PRO_0000086376" description="Dual specificity mitogen-activated protein kinase kinase 2">
    <location>
        <begin position="1"/>
        <end position="397"/>
    </location>
</feature>
<feature type="domain" description="Protein kinase" evidence="2">
    <location>
        <begin position="69"/>
        <end position="366"/>
    </location>
</feature>
<feature type="region of interest" description="Disordered" evidence="4">
    <location>
        <begin position="1"/>
        <end position="21"/>
    </location>
</feature>
<feature type="region of interest" description="Disordered" evidence="4">
    <location>
        <begin position="284"/>
        <end position="306"/>
    </location>
</feature>
<feature type="active site" description="Proton acceptor" evidence="2 3">
    <location>
        <position position="191"/>
    </location>
</feature>
<feature type="binding site" evidence="2">
    <location>
        <begin position="75"/>
        <end position="83"/>
    </location>
    <ligand>
        <name>ATP</name>
        <dbReference type="ChEBI" id="CHEBI:30616"/>
    </ligand>
</feature>
<feature type="binding site" evidence="2">
    <location>
        <position position="98"/>
    </location>
    <ligand>
        <name>ATP</name>
        <dbReference type="ChEBI" id="CHEBI:30616"/>
    </ligand>
</feature>
<feature type="modified residue" description="Phosphoserine; by RAF" evidence="1">
    <location>
        <position position="219"/>
    </location>
</feature>
<feature type="modified residue" description="Phosphoserine; by RAF" evidence="1">
    <location>
        <position position="223"/>
    </location>
</feature>
<name>MP2K2_CYPCA</name>
<comment type="function">
    <text evidence="1">Catalyzes the concomitant phosphorylation of a threonine and a tyrosine residue in a Thr-Glu-Tyr sequence located in MAP kinases.</text>
</comment>
<comment type="catalytic activity">
    <reaction>
        <text>L-seryl-[protein] + ATP = O-phospho-L-seryl-[protein] + ADP + H(+)</text>
        <dbReference type="Rhea" id="RHEA:17989"/>
        <dbReference type="Rhea" id="RHEA-COMP:9863"/>
        <dbReference type="Rhea" id="RHEA-COMP:11604"/>
        <dbReference type="ChEBI" id="CHEBI:15378"/>
        <dbReference type="ChEBI" id="CHEBI:29999"/>
        <dbReference type="ChEBI" id="CHEBI:30616"/>
        <dbReference type="ChEBI" id="CHEBI:83421"/>
        <dbReference type="ChEBI" id="CHEBI:456216"/>
        <dbReference type="EC" id="2.7.12.2"/>
    </reaction>
</comment>
<comment type="catalytic activity">
    <reaction>
        <text>L-threonyl-[protein] + ATP = O-phospho-L-threonyl-[protein] + ADP + H(+)</text>
        <dbReference type="Rhea" id="RHEA:46608"/>
        <dbReference type="Rhea" id="RHEA-COMP:11060"/>
        <dbReference type="Rhea" id="RHEA-COMP:11605"/>
        <dbReference type="ChEBI" id="CHEBI:15378"/>
        <dbReference type="ChEBI" id="CHEBI:30013"/>
        <dbReference type="ChEBI" id="CHEBI:30616"/>
        <dbReference type="ChEBI" id="CHEBI:61977"/>
        <dbReference type="ChEBI" id="CHEBI:456216"/>
        <dbReference type="EC" id="2.7.12.2"/>
    </reaction>
</comment>
<comment type="catalytic activity">
    <reaction>
        <text>L-tyrosyl-[protein] + ATP = O-phospho-L-tyrosyl-[protein] + ADP + H(+)</text>
        <dbReference type="Rhea" id="RHEA:10596"/>
        <dbReference type="Rhea" id="RHEA-COMP:10136"/>
        <dbReference type="Rhea" id="RHEA-COMP:20101"/>
        <dbReference type="ChEBI" id="CHEBI:15378"/>
        <dbReference type="ChEBI" id="CHEBI:30616"/>
        <dbReference type="ChEBI" id="CHEBI:46858"/>
        <dbReference type="ChEBI" id="CHEBI:61978"/>
        <dbReference type="ChEBI" id="CHEBI:456216"/>
        <dbReference type="EC" id="2.7.12.2"/>
    </reaction>
</comment>
<comment type="PTM">
    <text evidence="1">Phosphorylation on Ser/Thr by MAP kinase kinase kinases (RAF) positively regulates the kinase activity.</text>
</comment>
<comment type="similarity">
    <text evidence="5">Belongs to the protein kinase superfamily. STE Ser/Thr protein kinase family. MAP kinase kinase subfamily.</text>
</comment>
<reference key="1">
    <citation type="journal article" date="1994" name="Biochim. Biophys. Acta">
        <title>Molecular cloning and sequencing of a carp cDNA encoding mitogen-activated protein kinase kinase.</title>
        <authorList>
            <person name="Huang C.-J."/>
            <person name="Lee M.-S."/>
            <person name="Chang G.-D."/>
            <person name="Huang F.-L."/>
            <person name="Lo T.-B."/>
        </authorList>
    </citation>
    <scope>NUCLEOTIDE SEQUENCE [MRNA]</scope>
    <source>
        <tissue>Liver</tissue>
    </source>
</reference>